<gene>
    <name evidence="1" type="primary">pgi</name>
    <name type="ordered locus">Sez_0203</name>
</gene>
<comment type="function">
    <text evidence="1">Catalyzes the reversible isomerization of glucose-6-phosphate to fructose-6-phosphate.</text>
</comment>
<comment type="catalytic activity">
    <reaction evidence="1">
        <text>alpha-D-glucose 6-phosphate = beta-D-fructose 6-phosphate</text>
        <dbReference type="Rhea" id="RHEA:11816"/>
        <dbReference type="ChEBI" id="CHEBI:57634"/>
        <dbReference type="ChEBI" id="CHEBI:58225"/>
        <dbReference type="EC" id="5.3.1.9"/>
    </reaction>
</comment>
<comment type="pathway">
    <text evidence="1">Carbohydrate biosynthesis; gluconeogenesis.</text>
</comment>
<comment type="pathway">
    <text evidence="1">Carbohydrate degradation; glycolysis; D-glyceraldehyde 3-phosphate and glycerone phosphate from D-glucose: step 2/4.</text>
</comment>
<comment type="subcellular location">
    <subcellularLocation>
        <location evidence="1">Cytoplasm</location>
    </subcellularLocation>
</comment>
<comment type="similarity">
    <text evidence="1">Belongs to the GPI family.</text>
</comment>
<keyword id="KW-0963">Cytoplasm</keyword>
<keyword id="KW-0312">Gluconeogenesis</keyword>
<keyword id="KW-0324">Glycolysis</keyword>
<keyword id="KW-0413">Isomerase</keyword>
<sequence>MSHITFDYSKVLEQFAGQHEIDFLQGQVTEADQALRQGTGPGSDFLGWLELPENYDKEEFARILKAAEKIKADSDVLVVIGIGGSYLGAKAAIDFLNSHFANLQTAKERKAPQILYAGNSISSSYLADLVDYVQDKDFSVNVISKSGTTTEPAIAFRVFKELLVKKYGQEEANKRIYATTDKVKGAVKVEADANHWETFVVPDNVGGRFSVLTAVGLLPIAASGADITALMEGANAARKDLSSDKISENIAYQYAVVRNILYRKGYVTEILANYEPSLQYFSEWWKQLAGESEGKDQKGIYPTSANFSTDLHSLGQFIQEGYRNLFETVIRVDKPRQNVIIPEMAEDLDGLGYLQGKDVDFVNKKATDGVLLAHTDGGVPNMFITLPEQDEFTLGYTIYFFELAIALSGYLNGVNPFDQPGVEAYKKNMFALLGKPGFEELGAALNARL</sequence>
<evidence type="ECO:0000255" key="1">
    <source>
        <dbReference type="HAMAP-Rule" id="MF_00473"/>
    </source>
</evidence>
<dbReference type="EC" id="5.3.1.9" evidence="1"/>
<dbReference type="EMBL" id="CP001129">
    <property type="protein sequence ID" value="ACG61581.1"/>
    <property type="molecule type" value="Genomic_DNA"/>
</dbReference>
<dbReference type="RefSeq" id="WP_012514863.1">
    <property type="nucleotide sequence ID" value="NC_011134.1"/>
</dbReference>
<dbReference type="SMR" id="B4U0D8"/>
<dbReference type="KEGG" id="sez:Sez_0203"/>
<dbReference type="HOGENOM" id="CLU_037303_0_1_9"/>
<dbReference type="UniPathway" id="UPA00109">
    <property type="reaction ID" value="UER00181"/>
</dbReference>
<dbReference type="UniPathway" id="UPA00138"/>
<dbReference type="Proteomes" id="UP000001873">
    <property type="component" value="Chromosome"/>
</dbReference>
<dbReference type="GO" id="GO:0005829">
    <property type="term" value="C:cytosol"/>
    <property type="evidence" value="ECO:0007669"/>
    <property type="project" value="TreeGrafter"/>
</dbReference>
<dbReference type="GO" id="GO:0097367">
    <property type="term" value="F:carbohydrate derivative binding"/>
    <property type="evidence" value="ECO:0007669"/>
    <property type="project" value="InterPro"/>
</dbReference>
<dbReference type="GO" id="GO:0004347">
    <property type="term" value="F:glucose-6-phosphate isomerase activity"/>
    <property type="evidence" value="ECO:0007669"/>
    <property type="project" value="UniProtKB-UniRule"/>
</dbReference>
<dbReference type="GO" id="GO:0048029">
    <property type="term" value="F:monosaccharide binding"/>
    <property type="evidence" value="ECO:0007669"/>
    <property type="project" value="TreeGrafter"/>
</dbReference>
<dbReference type="GO" id="GO:0006094">
    <property type="term" value="P:gluconeogenesis"/>
    <property type="evidence" value="ECO:0007669"/>
    <property type="project" value="UniProtKB-UniRule"/>
</dbReference>
<dbReference type="GO" id="GO:0051156">
    <property type="term" value="P:glucose 6-phosphate metabolic process"/>
    <property type="evidence" value="ECO:0007669"/>
    <property type="project" value="TreeGrafter"/>
</dbReference>
<dbReference type="GO" id="GO:0006096">
    <property type="term" value="P:glycolytic process"/>
    <property type="evidence" value="ECO:0007669"/>
    <property type="project" value="UniProtKB-UniRule"/>
</dbReference>
<dbReference type="CDD" id="cd05015">
    <property type="entry name" value="SIS_PGI_1"/>
    <property type="match status" value="1"/>
</dbReference>
<dbReference type="CDD" id="cd05016">
    <property type="entry name" value="SIS_PGI_2"/>
    <property type="match status" value="1"/>
</dbReference>
<dbReference type="FunFam" id="3.40.50.10490:FF:000015">
    <property type="entry name" value="Glucose-6-phosphate isomerase"/>
    <property type="match status" value="1"/>
</dbReference>
<dbReference type="FunFam" id="3.40.50.10490:FF:000016">
    <property type="entry name" value="Glucose-6-phosphate isomerase"/>
    <property type="match status" value="1"/>
</dbReference>
<dbReference type="Gene3D" id="3.40.50.10490">
    <property type="entry name" value="Glucose-6-phosphate isomerase like protein, domain 1"/>
    <property type="match status" value="2"/>
</dbReference>
<dbReference type="HAMAP" id="MF_00473">
    <property type="entry name" value="G6P_isomerase"/>
    <property type="match status" value="1"/>
</dbReference>
<dbReference type="InterPro" id="IPR001672">
    <property type="entry name" value="G6P_Isomerase"/>
</dbReference>
<dbReference type="InterPro" id="IPR018189">
    <property type="entry name" value="Phosphoglucose_isomerase_CS"/>
</dbReference>
<dbReference type="InterPro" id="IPR046348">
    <property type="entry name" value="SIS_dom_sf"/>
</dbReference>
<dbReference type="InterPro" id="IPR035476">
    <property type="entry name" value="SIS_PGI_1"/>
</dbReference>
<dbReference type="InterPro" id="IPR035482">
    <property type="entry name" value="SIS_PGI_2"/>
</dbReference>
<dbReference type="NCBIfam" id="NF010697">
    <property type="entry name" value="PRK14097.1"/>
    <property type="match status" value="1"/>
</dbReference>
<dbReference type="PANTHER" id="PTHR11469">
    <property type="entry name" value="GLUCOSE-6-PHOSPHATE ISOMERASE"/>
    <property type="match status" value="1"/>
</dbReference>
<dbReference type="PANTHER" id="PTHR11469:SF1">
    <property type="entry name" value="GLUCOSE-6-PHOSPHATE ISOMERASE"/>
    <property type="match status" value="1"/>
</dbReference>
<dbReference type="Pfam" id="PF00342">
    <property type="entry name" value="PGI"/>
    <property type="match status" value="1"/>
</dbReference>
<dbReference type="PRINTS" id="PR00662">
    <property type="entry name" value="G6PISOMERASE"/>
</dbReference>
<dbReference type="SUPFAM" id="SSF53697">
    <property type="entry name" value="SIS domain"/>
    <property type="match status" value="1"/>
</dbReference>
<dbReference type="PROSITE" id="PS00765">
    <property type="entry name" value="P_GLUCOSE_ISOMERASE_1"/>
    <property type="match status" value="1"/>
</dbReference>
<dbReference type="PROSITE" id="PS00174">
    <property type="entry name" value="P_GLUCOSE_ISOMERASE_2"/>
    <property type="match status" value="1"/>
</dbReference>
<dbReference type="PROSITE" id="PS51463">
    <property type="entry name" value="P_GLUCOSE_ISOMERASE_3"/>
    <property type="match status" value="1"/>
</dbReference>
<feature type="chain" id="PRO_1000125761" description="Glucose-6-phosphate isomerase">
    <location>
        <begin position="1"/>
        <end position="449"/>
    </location>
</feature>
<feature type="active site" description="Proton donor" evidence="1">
    <location>
        <position position="291"/>
    </location>
</feature>
<feature type="active site" evidence="1">
    <location>
        <position position="312"/>
    </location>
</feature>
<feature type="active site" evidence="1">
    <location>
        <position position="426"/>
    </location>
</feature>
<reference key="1">
    <citation type="journal article" date="2008" name="PLoS ONE">
        <title>Genome sequence of a lancefield group C Streptococcus zooepidemicus strain causing epidemic nephritis: new information about an old disease.</title>
        <authorList>
            <person name="Beres S.B."/>
            <person name="Sesso R."/>
            <person name="Pinto S.W.L."/>
            <person name="Hoe N.P."/>
            <person name="Porcella S.F."/>
            <person name="Deleo F.R."/>
            <person name="Musser J.M."/>
        </authorList>
    </citation>
    <scope>NUCLEOTIDE SEQUENCE [LARGE SCALE GENOMIC DNA]</scope>
    <source>
        <strain>MGCS10565</strain>
    </source>
</reference>
<proteinExistence type="inferred from homology"/>
<protein>
    <recommendedName>
        <fullName evidence="1">Glucose-6-phosphate isomerase</fullName>
        <shortName evidence="1">GPI</shortName>
        <ecNumber evidence="1">5.3.1.9</ecNumber>
    </recommendedName>
    <alternativeName>
        <fullName evidence="1">Phosphoglucose isomerase</fullName>
        <shortName evidence="1">PGI</shortName>
    </alternativeName>
    <alternativeName>
        <fullName evidence="1">Phosphohexose isomerase</fullName>
        <shortName evidence="1">PHI</shortName>
    </alternativeName>
</protein>
<organism>
    <name type="scientific">Streptococcus equi subsp. zooepidemicus (strain MGCS10565)</name>
    <dbReference type="NCBI Taxonomy" id="552526"/>
    <lineage>
        <taxon>Bacteria</taxon>
        <taxon>Bacillati</taxon>
        <taxon>Bacillota</taxon>
        <taxon>Bacilli</taxon>
        <taxon>Lactobacillales</taxon>
        <taxon>Streptococcaceae</taxon>
        <taxon>Streptococcus</taxon>
    </lineage>
</organism>
<accession>B4U0D8</accession>
<name>G6PI_STREM</name>